<organism>
    <name type="scientific">Escherichia coli O8 (strain IAI1)</name>
    <dbReference type="NCBI Taxonomy" id="585034"/>
    <lineage>
        <taxon>Bacteria</taxon>
        <taxon>Pseudomonadati</taxon>
        <taxon>Pseudomonadota</taxon>
        <taxon>Gammaproteobacteria</taxon>
        <taxon>Enterobacterales</taxon>
        <taxon>Enterobacteriaceae</taxon>
        <taxon>Escherichia</taxon>
    </lineage>
</organism>
<evidence type="ECO:0000255" key="1">
    <source>
        <dbReference type="HAMAP-Rule" id="MF_00465"/>
    </source>
</evidence>
<accession>B7M161</accession>
<name>SPED_ECO8A</name>
<comment type="function">
    <text evidence="1">Catalyzes the decarboxylation of S-adenosylmethionine to S-adenosylmethioninamine (dcAdoMet), the propylamine donor required for the synthesis of the polyamines spermine and spermidine from the diamine putrescine.</text>
</comment>
<comment type="catalytic activity">
    <reaction evidence="1">
        <text>S-adenosyl-L-methionine + H(+) = S-adenosyl 3-(methylsulfanyl)propylamine + CO2</text>
        <dbReference type="Rhea" id="RHEA:15981"/>
        <dbReference type="ChEBI" id="CHEBI:15378"/>
        <dbReference type="ChEBI" id="CHEBI:16526"/>
        <dbReference type="ChEBI" id="CHEBI:57443"/>
        <dbReference type="ChEBI" id="CHEBI:59789"/>
        <dbReference type="EC" id="4.1.1.50"/>
    </reaction>
</comment>
<comment type="cofactor">
    <cofactor evidence="1">
        <name>pyruvate</name>
        <dbReference type="ChEBI" id="CHEBI:15361"/>
    </cofactor>
    <text evidence="1">Binds 1 pyruvoyl group covalently per subunit.</text>
</comment>
<comment type="pathway">
    <text evidence="1">Amine and polyamine biosynthesis; S-adenosylmethioninamine biosynthesis; S-adenosylmethioninamine from S-adenosyl-L-methionine: step 1/1.</text>
</comment>
<comment type="subunit">
    <text evidence="1">Heterooctamer of four alpha and four beta chains arranged as a tetramer of alpha/beta heterodimers.</text>
</comment>
<comment type="PTM">
    <text evidence="1">Is synthesized initially as an inactive proenzyme. Formation of the active enzyme involves a self-maturation process in which the active site pyruvoyl group is generated from an internal serine residue via an autocatalytic post-translational modification. Two non-identical subunits are generated from the proenzyme in this reaction, and the pyruvate is formed at the N-terminus of the alpha chain, which is derived from the carboxyl end of the proenzyme. The post-translation cleavage follows an unusual pathway, termed non-hydrolytic serinolysis, in which the side chain hydroxyl group of the serine supplies its oxygen atom to form the C-terminus of the beta chain, while the remainder of the serine residue undergoes an oxidative deamination to produce ammonia and the pyruvoyl group blocking the N-terminus of the alpha chain.</text>
</comment>
<comment type="similarity">
    <text evidence="1">Belongs to the prokaryotic AdoMetDC family. Type 2 subfamily.</text>
</comment>
<dbReference type="EC" id="4.1.1.50" evidence="1"/>
<dbReference type="EMBL" id="CU928160">
    <property type="protein sequence ID" value="CAQ97007.1"/>
    <property type="molecule type" value="Genomic_DNA"/>
</dbReference>
<dbReference type="RefSeq" id="WP_000734287.1">
    <property type="nucleotide sequence ID" value="NC_011741.1"/>
</dbReference>
<dbReference type="GeneID" id="93777316"/>
<dbReference type="KEGG" id="ecr:ECIAI1_0118"/>
<dbReference type="HOGENOM" id="CLU_092007_0_0_6"/>
<dbReference type="UniPathway" id="UPA00331">
    <property type="reaction ID" value="UER00451"/>
</dbReference>
<dbReference type="GO" id="GO:0005829">
    <property type="term" value="C:cytosol"/>
    <property type="evidence" value="ECO:0007669"/>
    <property type="project" value="TreeGrafter"/>
</dbReference>
<dbReference type="GO" id="GO:0004014">
    <property type="term" value="F:adenosylmethionine decarboxylase activity"/>
    <property type="evidence" value="ECO:0007669"/>
    <property type="project" value="UniProtKB-UniRule"/>
</dbReference>
<dbReference type="GO" id="GO:0008295">
    <property type="term" value="P:spermidine biosynthetic process"/>
    <property type="evidence" value="ECO:0007669"/>
    <property type="project" value="UniProtKB-UniRule"/>
</dbReference>
<dbReference type="FunFam" id="3.60.90.10:FF:000001">
    <property type="entry name" value="S-adenosylmethionine decarboxylase proenzyme"/>
    <property type="match status" value="1"/>
</dbReference>
<dbReference type="Gene3D" id="3.60.90.10">
    <property type="entry name" value="S-adenosylmethionine decarboxylase"/>
    <property type="match status" value="1"/>
</dbReference>
<dbReference type="HAMAP" id="MF_00465">
    <property type="entry name" value="AdoMetDC_2"/>
    <property type="match status" value="1"/>
</dbReference>
<dbReference type="InterPro" id="IPR003826">
    <property type="entry name" value="AdoMetDC_fam_prok"/>
</dbReference>
<dbReference type="InterPro" id="IPR009165">
    <property type="entry name" value="S-AdoMet_deCO2ase_bac"/>
</dbReference>
<dbReference type="InterPro" id="IPR016067">
    <property type="entry name" value="S-AdoMet_deCO2ase_core"/>
</dbReference>
<dbReference type="NCBIfam" id="TIGR03331">
    <property type="entry name" value="SAM_DCase_Eco"/>
    <property type="match status" value="1"/>
</dbReference>
<dbReference type="PANTHER" id="PTHR33866">
    <property type="entry name" value="S-ADENOSYLMETHIONINE DECARBOXYLASE PROENZYME"/>
    <property type="match status" value="1"/>
</dbReference>
<dbReference type="PANTHER" id="PTHR33866:SF1">
    <property type="entry name" value="S-ADENOSYLMETHIONINE DECARBOXYLASE PROENZYME"/>
    <property type="match status" value="1"/>
</dbReference>
<dbReference type="Pfam" id="PF02675">
    <property type="entry name" value="AdoMet_dc"/>
    <property type="match status" value="1"/>
</dbReference>
<dbReference type="PIRSF" id="PIRSF001356">
    <property type="entry name" value="SAM_decarboxylas"/>
    <property type="match status" value="1"/>
</dbReference>
<dbReference type="SUPFAM" id="SSF56276">
    <property type="entry name" value="S-adenosylmethionine decarboxylase"/>
    <property type="match status" value="1"/>
</dbReference>
<gene>
    <name evidence="1" type="primary">speD</name>
    <name type="ordered locus">ECIAI1_0118</name>
</gene>
<protein>
    <recommendedName>
        <fullName evidence="1">S-adenosylmethionine decarboxylase proenzyme</fullName>
        <shortName evidence="1">AdoMetDC</shortName>
        <shortName evidence="1">SAMDC</shortName>
        <ecNumber evidence="1">4.1.1.50</ecNumber>
    </recommendedName>
    <component>
        <recommendedName>
            <fullName evidence="1">S-adenosylmethionine decarboxylase beta chain</fullName>
        </recommendedName>
    </component>
    <component>
        <recommendedName>
            <fullName evidence="1">S-adenosylmethionine decarboxylase alpha chain</fullName>
        </recommendedName>
    </component>
</protein>
<proteinExistence type="inferred from homology"/>
<keyword id="KW-0068">Autocatalytic cleavage</keyword>
<keyword id="KW-0210">Decarboxylase</keyword>
<keyword id="KW-0456">Lyase</keyword>
<keyword id="KW-0620">Polyamine biosynthesis</keyword>
<keyword id="KW-0670">Pyruvate</keyword>
<keyword id="KW-0949">S-adenosyl-L-methionine</keyword>
<keyword id="KW-0704">Schiff base</keyword>
<keyword id="KW-0745">Spermidine biosynthesis</keyword>
<keyword id="KW-0865">Zymogen</keyword>
<reference key="1">
    <citation type="journal article" date="2009" name="PLoS Genet.">
        <title>Organised genome dynamics in the Escherichia coli species results in highly diverse adaptive paths.</title>
        <authorList>
            <person name="Touchon M."/>
            <person name="Hoede C."/>
            <person name="Tenaillon O."/>
            <person name="Barbe V."/>
            <person name="Baeriswyl S."/>
            <person name="Bidet P."/>
            <person name="Bingen E."/>
            <person name="Bonacorsi S."/>
            <person name="Bouchier C."/>
            <person name="Bouvet O."/>
            <person name="Calteau A."/>
            <person name="Chiapello H."/>
            <person name="Clermont O."/>
            <person name="Cruveiller S."/>
            <person name="Danchin A."/>
            <person name="Diard M."/>
            <person name="Dossat C."/>
            <person name="Karoui M.E."/>
            <person name="Frapy E."/>
            <person name="Garry L."/>
            <person name="Ghigo J.M."/>
            <person name="Gilles A.M."/>
            <person name="Johnson J."/>
            <person name="Le Bouguenec C."/>
            <person name="Lescat M."/>
            <person name="Mangenot S."/>
            <person name="Martinez-Jehanne V."/>
            <person name="Matic I."/>
            <person name="Nassif X."/>
            <person name="Oztas S."/>
            <person name="Petit M.A."/>
            <person name="Pichon C."/>
            <person name="Rouy Z."/>
            <person name="Ruf C.S."/>
            <person name="Schneider D."/>
            <person name="Tourret J."/>
            <person name="Vacherie B."/>
            <person name="Vallenet D."/>
            <person name="Medigue C."/>
            <person name="Rocha E.P.C."/>
            <person name="Denamur E."/>
        </authorList>
    </citation>
    <scope>NUCLEOTIDE SEQUENCE [LARGE SCALE GENOMIC DNA]</scope>
    <source>
        <strain>IAI1</strain>
    </source>
</reference>
<sequence>MKKLKLHGFNNLTKSLSFCIYDICYAKTAEERDGYIAYIDELYNANRLTEILSETCSIIGANILNIARQDYEPQGASVTILVSEEPVDPKLIDKTEHPGPLPETVVAHLDKSHICVHTYPESHPEGGLCTFRADIEVSTCGVISPLKALNYLIHQLESDIVTIDYRVRGFTRDINGMKHFIDHEINSIQNFMSDDMKALYDMVDVNVYQENIFHTKMLLKEFDLKHYMFHTKPEDLTDSERQEITAALWKEMREIYYGRNMPAV</sequence>
<feature type="chain" id="PRO_1000125481" description="S-adenosylmethionine decarboxylase beta chain" evidence="1">
    <location>
        <begin position="1"/>
        <end position="111"/>
    </location>
</feature>
<feature type="chain" id="PRO_1000125482" description="S-adenosylmethionine decarboxylase alpha chain" evidence="1">
    <location>
        <begin position="112"/>
        <end position="264"/>
    </location>
</feature>
<feature type="active site" description="Schiff-base intermediate with substrate; via pyruvic acid" evidence="1">
    <location>
        <position position="112"/>
    </location>
</feature>
<feature type="active site" description="Proton acceptor; for processing activity" evidence="1">
    <location>
        <position position="117"/>
    </location>
</feature>
<feature type="active site" description="Proton donor; for catalytic activity" evidence="1">
    <location>
        <position position="140"/>
    </location>
</feature>
<feature type="site" description="Cleavage (non-hydrolytic); by autolysis" evidence="1">
    <location>
        <begin position="111"/>
        <end position="112"/>
    </location>
</feature>
<feature type="modified residue" description="Pyruvic acid (Ser); by autocatalysis" evidence="1">
    <location>
        <position position="112"/>
    </location>
</feature>